<evidence type="ECO:0000250" key="1"/>
<evidence type="ECO:0000250" key="2">
    <source>
        <dbReference type="UniProtKB" id="P06803"/>
    </source>
</evidence>
<evidence type="ECO:0000250" key="3">
    <source>
        <dbReference type="UniProtKB" id="P11309"/>
    </source>
</evidence>
<evidence type="ECO:0000255" key="4">
    <source>
        <dbReference type="PROSITE-ProRule" id="PRU00159"/>
    </source>
</evidence>
<evidence type="ECO:0000255" key="5">
    <source>
        <dbReference type="PROSITE-ProRule" id="PRU10027"/>
    </source>
</evidence>
<evidence type="ECO:0000305" key="6"/>
<sequence>MLLSKINSLAHLRAAPCNDLHANKLAPGKEKEPLESQYQVGPLLGSGGFGSVYSGIRVADNLPVAIKHVEKDRISDWGELPNGTRVPMEVVLLKKVSSGFSGVIRLLDWFERPDSFVLILERPEPVQDLFDFITERGALQEELARSFFWQVLEAVRHCHNCGVLHRDIKDENILIDLNRGELKLIDFGSGALLKDTVYTDFDGTRVYSPPEWIRYHRYHGRSAAVWSLGILLYDMVCGDIPFEHDEEIVKGQVYFRQRVSSECQHLIRWCLSLRPSDRPSFEEIQNHPWMQDVLLPQATAEIHLHSLSPSPSK</sequence>
<reference key="1">
    <citation type="journal article" date="1992" name="Nucleic Acids Res.">
        <title>Characterization of the testes-specific pim-1 transcript in rat.</title>
        <authorList>
            <person name="Wingett D."/>
            <person name="Reeves R."/>
            <person name="Magnuson N.S."/>
        </authorList>
    </citation>
    <scope>NUCLEOTIDE SEQUENCE [MRNA]</scope>
    <source>
        <strain>Sprague-Dawley</strain>
        <tissue>Testis</tissue>
    </source>
</reference>
<reference key="2">
    <citation type="journal article" date="1999" name="J. Biol. Chem.">
        <title>Physical and functional interactions between Pim-1 kinase and Cdc25A phosphatase. Implications for the Pim-1-mediated activation of the c-Myc signaling pathway.</title>
        <authorList>
            <person name="Mochizuki T."/>
            <person name="Kitanaka C."/>
            <person name="Noguchi K."/>
            <person name="Muramatsu T."/>
            <person name="Asai A."/>
            <person name="Kuchino Y."/>
        </authorList>
    </citation>
    <scope>FUNCTION IN PHOSPHORYLATION OF CDC25A</scope>
    <scope>INTERACTION WITH CDC25A</scope>
</reference>
<comment type="function">
    <text evidence="2 3">Proto-oncogene with serine/threonine kinase activity involved in cell survival and cell proliferation and thus providing a selective advantage in tumorigenesis. Exerts its oncogenic activity through: the regulation of MYC transcriptional activity, the regulation of cell cycle progression and by phosphorylation and inhibition of proapoptotic proteins (BAD, MAP3K5, FOXO3) (By similarity). Phosphorylation of MYC leads to an increase of MYC protein stability and thereby an increase of transcriptional activity. The stabilization of MYC exerted by PIM1 might explain partly the strong synergism between these two oncogenes in tumorigenesis. Mediates survival signaling through phosphorylation of BAD, which induces release of the anti-apoptotic protein Bcl-X(L)/BCL2L1 (By similarity). Phosphorylation of MAP3K5, another proapoptotic protein, by PIM1, significantly decreases MAP3K5 kinase activity and inhibits MAP3K5-mediated phosphorylation of JNK and JNK/p38MAPK subsequently reducing caspase-3 activation and cell apoptosis. Stimulates cell cycle progression at the G1-S and G2-M transitions by phosphorylation of CDC25A and CDC25C. Phosphorylation of CDKN1A, a regulator of cell cycle progression at G1, results in the relocation of CDKN1A to the cytoplasm and enhanced CDKN1A protein stability. Promotes cell cycle progression and tumorigenesis by down-regulating expression of a regulator of cell cycle progression, CDKN1B, at both transcriptional and post-translational levels. Phosphorylation of CDKN1B, induces 14-3-3 proteins binding, nuclear export and proteasome-dependent degradation. May affect the structure or silencing of chromatin by phosphorylating HP1 gamma/CBX3 (By similarity). Acts also as a regulator of homing and migration of bone marrow cells involving functional interaction with the CXCL12-CXCR4 signaling axis (By similarity). Acts as a positive regulator of mTORC1 signaling by mediating phosphorylation and inhibition of DEPDC5 component of the GATOR1 complex. Acts as a negative regulator of innate immunity by mediating phosphorylation and inactivation of GBP1 in absence of infection: phosphorylation of GBP1 induces interaction with 14-3-3 protein sigma (SFN) and retention in the cytosol (By similarity). Also phosphorylates and activates the ATP-binding cassette transporter ABCG2, allowing resistance to drugs through their excretion from cells (By similarity). Promotes brown adipocyte differentiation (By similarity).</text>
</comment>
<comment type="catalytic activity">
    <reaction>
        <text>L-seryl-[protein] + ATP = O-phospho-L-seryl-[protein] + ADP + H(+)</text>
        <dbReference type="Rhea" id="RHEA:17989"/>
        <dbReference type="Rhea" id="RHEA-COMP:9863"/>
        <dbReference type="Rhea" id="RHEA-COMP:11604"/>
        <dbReference type="ChEBI" id="CHEBI:15378"/>
        <dbReference type="ChEBI" id="CHEBI:29999"/>
        <dbReference type="ChEBI" id="CHEBI:30616"/>
        <dbReference type="ChEBI" id="CHEBI:83421"/>
        <dbReference type="ChEBI" id="CHEBI:456216"/>
        <dbReference type="EC" id="2.7.11.1"/>
    </reaction>
</comment>
<comment type="catalytic activity">
    <reaction>
        <text>L-threonyl-[protein] + ATP = O-phospho-L-threonyl-[protein] + ADP + H(+)</text>
        <dbReference type="Rhea" id="RHEA:46608"/>
        <dbReference type="Rhea" id="RHEA-COMP:11060"/>
        <dbReference type="Rhea" id="RHEA-COMP:11605"/>
        <dbReference type="ChEBI" id="CHEBI:15378"/>
        <dbReference type="ChEBI" id="CHEBI:30013"/>
        <dbReference type="ChEBI" id="CHEBI:30616"/>
        <dbReference type="ChEBI" id="CHEBI:61977"/>
        <dbReference type="ChEBI" id="CHEBI:456216"/>
        <dbReference type="EC" id="2.7.11.1"/>
    </reaction>
</comment>
<comment type="cofactor">
    <cofactor evidence="3">
        <name>Mg(2+)</name>
        <dbReference type="ChEBI" id="CHEBI:18420"/>
    </cofactor>
</comment>
<comment type="subunit">
    <text evidence="2 3">Interacts with RP9 (By similarity). Interacts with HSP90AA1, this interaction stabilizes PIM1 protein levels. Interacts (ubiquitinated form) with HSP70 and promotes its proteasomal degradation (By similarity).</text>
</comment>
<comment type="subcellular location">
    <subcellularLocation>
        <location evidence="1">Cytoplasm</location>
    </subcellularLocation>
    <subcellularLocation>
        <location evidence="1">Nucleus</location>
    </subcellularLocation>
    <subcellularLocation>
        <location evidence="1">Cell membrane</location>
    </subcellularLocation>
</comment>
<comment type="PTM">
    <text evidence="1">Autophosphorylated on both serine/threonine and tyrosine residues (By similarity). Phosphorylated. Interaction with PPP2CA promotes dephosphorylation (By similarity).</text>
</comment>
<comment type="PTM">
    <text evidence="1">Ubiquitinated, leading to proteasomal degradation.</text>
</comment>
<comment type="similarity">
    <text evidence="6">Belongs to the protein kinase superfamily. CAMK Ser/Thr protein kinase family. PIM subfamily.</text>
</comment>
<organism>
    <name type="scientific">Rattus norvegicus</name>
    <name type="common">Rat</name>
    <dbReference type="NCBI Taxonomy" id="10116"/>
    <lineage>
        <taxon>Eukaryota</taxon>
        <taxon>Metazoa</taxon>
        <taxon>Chordata</taxon>
        <taxon>Craniata</taxon>
        <taxon>Vertebrata</taxon>
        <taxon>Euteleostomi</taxon>
        <taxon>Mammalia</taxon>
        <taxon>Eutheria</taxon>
        <taxon>Euarchontoglires</taxon>
        <taxon>Glires</taxon>
        <taxon>Rodentia</taxon>
        <taxon>Myomorpha</taxon>
        <taxon>Muroidea</taxon>
        <taxon>Muridae</taxon>
        <taxon>Murinae</taxon>
        <taxon>Rattus</taxon>
    </lineage>
</organism>
<gene>
    <name type="primary">Pim1</name>
    <name type="synonym">Pim-1</name>
</gene>
<protein>
    <recommendedName>
        <fullName>Serine/threonine-protein kinase pim-1</fullName>
        <ecNumber>2.7.11.1</ecNumber>
    </recommendedName>
</protein>
<keyword id="KW-0053">Apoptosis</keyword>
<keyword id="KW-0067">ATP-binding</keyword>
<keyword id="KW-0131">Cell cycle</keyword>
<keyword id="KW-1003">Cell membrane</keyword>
<keyword id="KW-0963">Cytoplasm</keyword>
<keyword id="KW-0418">Kinase</keyword>
<keyword id="KW-0460">Magnesium</keyword>
<keyword id="KW-0472">Membrane</keyword>
<keyword id="KW-0479">Metal-binding</keyword>
<keyword id="KW-0547">Nucleotide-binding</keyword>
<keyword id="KW-0539">Nucleus</keyword>
<keyword id="KW-0597">Phosphoprotein</keyword>
<keyword id="KW-0656">Proto-oncogene</keyword>
<keyword id="KW-1185">Reference proteome</keyword>
<keyword id="KW-0723">Serine/threonine-protein kinase</keyword>
<keyword id="KW-0808">Transferase</keyword>
<keyword id="KW-0832">Ubl conjugation</keyword>
<name>PIM1_RAT</name>
<dbReference type="EC" id="2.7.11.1"/>
<dbReference type="EMBL" id="X63675">
    <property type="protein sequence ID" value="CAA45214.1"/>
    <property type="molecule type" value="mRNA"/>
</dbReference>
<dbReference type="PIR" id="S26298">
    <property type="entry name" value="S26298"/>
</dbReference>
<dbReference type="RefSeq" id="NP_058730.1">
    <property type="nucleotide sequence ID" value="NM_017034.1"/>
</dbReference>
<dbReference type="SMR" id="P26794"/>
<dbReference type="FunCoup" id="P26794">
    <property type="interactions" value="708"/>
</dbReference>
<dbReference type="STRING" id="10116.ENSRNOP00000000637"/>
<dbReference type="PhosphoSitePlus" id="P26794"/>
<dbReference type="PaxDb" id="10116-ENSRNOP00000000637"/>
<dbReference type="Ensembl" id="ENSRNOT00000000637.6">
    <property type="protein sequence ID" value="ENSRNOP00000000637.3"/>
    <property type="gene ID" value="ENSRNOG00000000529.6"/>
</dbReference>
<dbReference type="GeneID" id="24649"/>
<dbReference type="KEGG" id="rno:24649"/>
<dbReference type="UCSC" id="RGD:3330">
    <property type="organism name" value="rat"/>
</dbReference>
<dbReference type="AGR" id="RGD:3330"/>
<dbReference type="CTD" id="5292"/>
<dbReference type="RGD" id="3330">
    <property type="gene designation" value="Pim1"/>
</dbReference>
<dbReference type="eggNOG" id="KOG0583">
    <property type="taxonomic scope" value="Eukaryota"/>
</dbReference>
<dbReference type="GeneTree" id="ENSGT00940000153394"/>
<dbReference type="HOGENOM" id="CLU_000288_63_0_1"/>
<dbReference type="InParanoid" id="P26794"/>
<dbReference type="OMA" id="IIRGQVY"/>
<dbReference type="OrthoDB" id="10252171at2759"/>
<dbReference type="PhylomeDB" id="P26794"/>
<dbReference type="PRO" id="PR:P26794"/>
<dbReference type="Proteomes" id="UP000002494">
    <property type="component" value="Chromosome 20"/>
</dbReference>
<dbReference type="Bgee" id="ENSRNOG00000000529">
    <property type="expression patterns" value="Expressed in testis and 19 other cell types or tissues"/>
</dbReference>
<dbReference type="GO" id="GO:0005737">
    <property type="term" value="C:cytoplasm"/>
    <property type="evidence" value="ECO:0000250"/>
    <property type="project" value="UniProtKB"/>
</dbReference>
<dbReference type="GO" id="GO:0005829">
    <property type="term" value="C:cytosol"/>
    <property type="evidence" value="ECO:0007669"/>
    <property type="project" value="Ensembl"/>
</dbReference>
<dbReference type="GO" id="GO:0005730">
    <property type="term" value="C:nucleolus"/>
    <property type="evidence" value="ECO:0007669"/>
    <property type="project" value="Ensembl"/>
</dbReference>
<dbReference type="GO" id="GO:0005654">
    <property type="term" value="C:nucleoplasm"/>
    <property type="evidence" value="ECO:0007669"/>
    <property type="project" value="Ensembl"/>
</dbReference>
<dbReference type="GO" id="GO:0005634">
    <property type="term" value="C:nucleus"/>
    <property type="evidence" value="ECO:0000266"/>
    <property type="project" value="RGD"/>
</dbReference>
<dbReference type="GO" id="GO:0005886">
    <property type="term" value="C:plasma membrane"/>
    <property type="evidence" value="ECO:0007669"/>
    <property type="project" value="UniProtKB-SubCell"/>
</dbReference>
<dbReference type="GO" id="GO:0005524">
    <property type="term" value="F:ATP binding"/>
    <property type="evidence" value="ECO:0000250"/>
    <property type="project" value="UniProtKB"/>
</dbReference>
<dbReference type="GO" id="GO:0030145">
    <property type="term" value="F:manganese ion binding"/>
    <property type="evidence" value="ECO:0000250"/>
    <property type="project" value="UniProtKB"/>
</dbReference>
<dbReference type="GO" id="GO:0106310">
    <property type="term" value="F:protein serine kinase activity"/>
    <property type="evidence" value="ECO:0007669"/>
    <property type="project" value="RHEA"/>
</dbReference>
<dbReference type="GO" id="GO:0004674">
    <property type="term" value="F:protein serine/threonine kinase activity"/>
    <property type="evidence" value="ECO:0000250"/>
    <property type="project" value="UniProtKB"/>
</dbReference>
<dbReference type="GO" id="GO:0043024">
    <property type="term" value="F:ribosomal small subunit binding"/>
    <property type="evidence" value="ECO:0000266"/>
    <property type="project" value="RGD"/>
</dbReference>
<dbReference type="GO" id="GO:0006915">
    <property type="term" value="P:apoptotic process"/>
    <property type="evidence" value="ECO:0007669"/>
    <property type="project" value="UniProtKB-KW"/>
</dbReference>
<dbReference type="GO" id="GO:1990748">
    <property type="term" value="P:cellular detoxification"/>
    <property type="evidence" value="ECO:0000250"/>
    <property type="project" value="UniProtKB"/>
</dbReference>
<dbReference type="GO" id="GO:0071346">
    <property type="term" value="P:cellular response to type II interferon"/>
    <property type="evidence" value="ECO:0000250"/>
    <property type="project" value="UniProtKB"/>
</dbReference>
<dbReference type="GO" id="GO:0043066">
    <property type="term" value="P:negative regulation of apoptotic process"/>
    <property type="evidence" value="ECO:0000250"/>
    <property type="project" value="UniProtKB"/>
</dbReference>
<dbReference type="GO" id="GO:0045824">
    <property type="term" value="P:negative regulation of innate immune response"/>
    <property type="evidence" value="ECO:0000250"/>
    <property type="project" value="UniProtKB"/>
</dbReference>
<dbReference type="GO" id="GO:0090336">
    <property type="term" value="P:positive regulation of brown fat cell differentiation"/>
    <property type="evidence" value="ECO:0000250"/>
    <property type="project" value="UniProtKB"/>
</dbReference>
<dbReference type="GO" id="GO:0060045">
    <property type="term" value="P:positive regulation of cardiac muscle cell proliferation"/>
    <property type="evidence" value="ECO:0000266"/>
    <property type="project" value="RGD"/>
</dbReference>
<dbReference type="GO" id="GO:1905062">
    <property type="term" value="P:positive regulation of cardioblast proliferation"/>
    <property type="evidence" value="ECO:0000266"/>
    <property type="project" value="RGD"/>
</dbReference>
<dbReference type="GO" id="GO:0045893">
    <property type="term" value="P:positive regulation of DNA-templated transcription"/>
    <property type="evidence" value="ECO:0000266"/>
    <property type="project" value="RGD"/>
</dbReference>
<dbReference type="GO" id="GO:1904263">
    <property type="term" value="P:positive regulation of TORC1 signaling"/>
    <property type="evidence" value="ECO:0000250"/>
    <property type="project" value="UniProtKB"/>
</dbReference>
<dbReference type="GO" id="GO:0006468">
    <property type="term" value="P:protein phosphorylation"/>
    <property type="evidence" value="ECO:0000250"/>
    <property type="project" value="UniProtKB"/>
</dbReference>
<dbReference type="GO" id="GO:0050821">
    <property type="term" value="P:protein stabilization"/>
    <property type="evidence" value="ECO:0000266"/>
    <property type="project" value="RGD"/>
</dbReference>
<dbReference type="GO" id="GO:1902033">
    <property type="term" value="P:regulation of hematopoietic stem cell proliferation"/>
    <property type="evidence" value="ECO:0000266"/>
    <property type="project" value="RGD"/>
</dbReference>
<dbReference type="GO" id="GO:0007346">
    <property type="term" value="P:regulation of mitotic cell cycle"/>
    <property type="evidence" value="ECO:0000318"/>
    <property type="project" value="GO_Central"/>
</dbReference>
<dbReference type="GO" id="GO:0022898">
    <property type="term" value="P:regulation of transmembrane transporter activity"/>
    <property type="evidence" value="ECO:0000250"/>
    <property type="project" value="UniProtKB"/>
</dbReference>
<dbReference type="GO" id="GO:0070561">
    <property type="term" value="P:vitamin D receptor signaling pathway"/>
    <property type="evidence" value="ECO:0000266"/>
    <property type="project" value="RGD"/>
</dbReference>
<dbReference type="CDD" id="cd14100">
    <property type="entry name" value="STKc_PIM1"/>
    <property type="match status" value="1"/>
</dbReference>
<dbReference type="FunFam" id="1.10.510.10:FF:000209">
    <property type="entry name" value="Serine/threonine-protein kinase pim-1"/>
    <property type="match status" value="1"/>
</dbReference>
<dbReference type="FunFam" id="3.30.200.20:FF:000232">
    <property type="entry name" value="Serine/threonine-protein kinase pim-1"/>
    <property type="match status" value="1"/>
</dbReference>
<dbReference type="Gene3D" id="3.30.200.20">
    <property type="entry name" value="Phosphorylase Kinase, domain 1"/>
    <property type="match status" value="1"/>
</dbReference>
<dbReference type="Gene3D" id="1.10.510.10">
    <property type="entry name" value="Transferase(Phosphotransferase) domain 1"/>
    <property type="match status" value="1"/>
</dbReference>
<dbReference type="InterPro" id="IPR011009">
    <property type="entry name" value="Kinase-like_dom_sf"/>
</dbReference>
<dbReference type="InterPro" id="IPR017348">
    <property type="entry name" value="PIM1/2/3"/>
</dbReference>
<dbReference type="InterPro" id="IPR051138">
    <property type="entry name" value="PIM_Ser/Thr_kinase"/>
</dbReference>
<dbReference type="InterPro" id="IPR000719">
    <property type="entry name" value="Prot_kinase_dom"/>
</dbReference>
<dbReference type="InterPro" id="IPR017441">
    <property type="entry name" value="Protein_kinase_ATP_BS"/>
</dbReference>
<dbReference type="InterPro" id="IPR008271">
    <property type="entry name" value="Ser/Thr_kinase_AS"/>
</dbReference>
<dbReference type="PANTHER" id="PTHR22984">
    <property type="entry name" value="SERINE/THREONINE-PROTEIN KINASE PIM"/>
    <property type="match status" value="1"/>
</dbReference>
<dbReference type="PANTHER" id="PTHR22984:SF29">
    <property type="entry name" value="SERINE_THREONINE-PROTEIN KINASE PIM-1"/>
    <property type="match status" value="1"/>
</dbReference>
<dbReference type="Pfam" id="PF00069">
    <property type="entry name" value="Pkinase"/>
    <property type="match status" value="1"/>
</dbReference>
<dbReference type="PIRSF" id="PIRSF037993">
    <property type="entry name" value="STPK_Pim-1"/>
    <property type="match status" value="1"/>
</dbReference>
<dbReference type="SMART" id="SM00220">
    <property type="entry name" value="S_TKc"/>
    <property type="match status" value="1"/>
</dbReference>
<dbReference type="SUPFAM" id="SSF56112">
    <property type="entry name" value="Protein kinase-like (PK-like)"/>
    <property type="match status" value="1"/>
</dbReference>
<dbReference type="PROSITE" id="PS00107">
    <property type="entry name" value="PROTEIN_KINASE_ATP"/>
    <property type="match status" value="1"/>
</dbReference>
<dbReference type="PROSITE" id="PS50011">
    <property type="entry name" value="PROTEIN_KINASE_DOM"/>
    <property type="match status" value="1"/>
</dbReference>
<dbReference type="PROSITE" id="PS00108">
    <property type="entry name" value="PROTEIN_KINASE_ST"/>
    <property type="match status" value="1"/>
</dbReference>
<feature type="chain" id="PRO_0000086530" description="Serine/threonine-protein kinase pim-1">
    <location>
        <begin position="1"/>
        <end position="313"/>
    </location>
</feature>
<feature type="domain" description="Protein kinase" evidence="4">
    <location>
        <begin position="38"/>
        <end position="290"/>
    </location>
</feature>
<feature type="active site" description="Proton acceptor" evidence="4 5">
    <location>
        <position position="167"/>
    </location>
</feature>
<feature type="binding site" evidence="4">
    <location>
        <begin position="44"/>
        <end position="52"/>
    </location>
    <ligand>
        <name>ATP</name>
        <dbReference type="ChEBI" id="CHEBI:30616"/>
    </ligand>
</feature>
<feature type="binding site" evidence="4">
    <location>
        <position position="67"/>
    </location>
    <ligand>
        <name>ATP</name>
        <dbReference type="ChEBI" id="CHEBI:30616"/>
    </ligand>
</feature>
<feature type="binding site" evidence="4">
    <location>
        <position position="121"/>
    </location>
    <ligand>
        <name>ATP</name>
        <dbReference type="ChEBI" id="CHEBI:30616"/>
    </ligand>
</feature>
<feature type="binding site" evidence="4">
    <location>
        <position position="128"/>
    </location>
    <ligand>
        <name>ATP</name>
        <dbReference type="ChEBI" id="CHEBI:30616"/>
    </ligand>
</feature>
<feature type="modified residue" description="Phosphoserine" evidence="3">
    <location>
        <position position="8"/>
    </location>
</feature>
<feature type="modified residue" description="Phosphoserine" evidence="3">
    <location>
        <position position="98"/>
    </location>
</feature>
<feature type="modified residue" description="Phosphoserine" evidence="3">
    <location>
        <position position="261"/>
    </location>
</feature>
<proteinExistence type="evidence at protein level"/>
<accession>P26794</accession>